<sequence>MTVRAALVFLLAVGLTGCVTSGDQNPLKTDKGRDEARDAYIQLGLGYLQRGNTEQAKVPLRKALEIDPSSADAHAALAVVFQTEMEPKLADEEYRKALASDSRNARVLNNYGGFLYEQKRYEEAYQRLLEASQDTLYPERSRVFENLGLVSLQMKKPAQAKEYFEKSLRLNRNQPSVALEMADLLYKEREYVPARQYYDLFAQGGGQNARSLLLGIRLAKVFEDRDTAASYGLQLKRLYPGSLEYQEFQAEK</sequence>
<name>PILF_PSEAE</name>
<reference key="1">
    <citation type="journal article" date="2000" name="Nature">
        <title>Complete genome sequence of Pseudomonas aeruginosa PAO1, an opportunistic pathogen.</title>
        <authorList>
            <person name="Stover C.K."/>
            <person name="Pham X.-Q.T."/>
            <person name="Erwin A.L."/>
            <person name="Mizoguchi S.D."/>
            <person name="Warrener P."/>
            <person name="Hickey M.J."/>
            <person name="Brinkman F.S.L."/>
            <person name="Hufnagle W.O."/>
            <person name="Kowalik D.J."/>
            <person name="Lagrou M."/>
            <person name="Garber R.L."/>
            <person name="Goltry L."/>
            <person name="Tolentino E."/>
            <person name="Westbrock-Wadman S."/>
            <person name="Yuan Y."/>
            <person name="Brody L.L."/>
            <person name="Coulter S.N."/>
            <person name="Folger K.R."/>
            <person name="Kas A."/>
            <person name="Larbig K."/>
            <person name="Lim R.M."/>
            <person name="Smith K.A."/>
            <person name="Spencer D.H."/>
            <person name="Wong G.K.-S."/>
            <person name="Wu Z."/>
            <person name="Paulsen I.T."/>
            <person name="Reizer J."/>
            <person name="Saier M.H. Jr."/>
            <person name="Hancock R.E.W."/>
            <person name="Lory S."/>
            <person name="Olson M.V."/>
        </authorList>
    </citation>
    <scope>NUCLEOTIDE SEQUENCE [LARGE SCALE GENOMIC DNA]</scope>
    <source>
        <strain>ATCC 15692 / DSM 22644 / CIP 104116 / JCM 14847 / LMG 12228 / 1C / PRS 101 / PAO1</strain>
    </source>
</reference>
<reference key="2">
    <citation type="journal article" date="1996" name="Gene">
        <title>Identification of a gene, pilF, required for type 4 fimbrial biogenesis and twitching motility in Pseudomonas aeruginosa.</title>
        <authorList>
            <person name="Watson A.A."/>
            <person name="Alm R.A."/>
            <person name="Mattick J.S."/>
        </authorList>
    </citation>
    <scope>FUNCTION</scope>
    <scope>DISRUPTION PHENOTYPE</scope>
</reference>
<reference key="3">
    <citation type="journal article" date="2013" name="Biochemistry">
        <title>Functional mapping of PilF and PilQ in the Pseudomonas aeruginosa type IV pilus system.</title>
        <authorList>
            <person name="Koo J."/>
            <person name="Tang T."/>
            <person name="Harvey H."/>
            <person name="Tammam S."/>
            <person name="Sampaleanu L."/>
            <person name="Burrows L.L."/>
            <person name="Howell P.L."/>
        </authorList>
    </citation>
    <scope>FUNCTION</scope>
    <scope>DOMAIN</scope>
    <scope>INTERACTION WITH PILQ</scope>
</reference>
<reference evidence="8" key="4">
    <citation type="journal article" date="2006" name="Biochem. Biophys. Res. Commun.">
        <title>Crystal structure of PilF: functional implication in the type 4 pilus biogenesis in Pseudomonas aeruginosa.</title>
        <authorList>
            <person name="Kim K."/>
            <person name="Oh J."/>
            <person name="Han D."/>
            <person name="Kim E.E."/>
            <person name="Lee B."/>
            <person name="Kim Y."/>
        </authorList>
    </citation>
    <scope>X-RAY CRYSTALLOGRAPHY (2.20 ANGSTROMS) OF 20-252</scope>
    <scope>DOMAIN</scope>
</reference>
<reference evidence="9" key="5">
    <citation type="journal article" date="2008" name="J. Bacteriol.">
        <title>PilF is an outer membrane lipoprotein required for multimerization and localization of the Pseudomonas aeruginosa Type IV pilus secretin.</title>
        <authorList>
            <person name="Koo J."/>
            <person name="Tammam S."/>
            <person name="Ku S.Y."/>
            <person name="Sampaleanu L.M."/>
            <person name="Burrows L.L."/>
            <person name="Howell P.L."/>
        </authorList>
    </citation>
    <scope>X-RAY CRYSTALLOGRAPHY (2.00 ANGSTROMS) OF 22-252</scope>
    <scope>FUNCTION</scope>
    <scope>SUBCELLULAR LOCATION</scope>
    <scope>DISRUPTION PHENOTYPE</scope>
    <scope>DOMAIN</scope>
    <scope>MUTAGENESIS OF CYS-18</scope>
</reference>
<dbReference type="EMBL" id="AE004091">
    <property type="protein sequence ID" value="AAG07192.1"/>
    <property type="molecule type" value="Genomic_DNA"/>
</dbReference>
<dbReference type="PIR" id="H83171">
    <property type="entry name" value="H83171"/>
</dbReference>
<dbReference type="RefSeq" id="NP_252494.1">
    <property type="nucleotide sequence ID" value="NC_002516.2"/>
</dbReference>
<dbReference type="RefSeq" id="WP_003113801.1">
    <property type="nucleotide sequence ID" value="NZ_QZGE01000001.1"/>
</dbReference>
<dbReference type="PDB" id="2FI7">
    <property type="method" value="X-ray"/>
    <property type="resolution" value="2.20 A"/>
    <property type="chains" value="A/B=20-252"/>
</dbReference>
<dbReference type="PDB" id="2HO1">
    <property type="method" value="X-ray"/>
    <property type="resolution" value="2.00 A"/>
    <property type="chains" value="A/B=11-252"/>
</dbReference>
<dbReference type="PDBsum" id="2FI7"/>
<dbReference type="PDBsum" id="2HO1"/>
<dbReference type="SMR" id="Q9HXJ2"/>
<dbReference type="STRING" id="208964.PA3805"/>
<dbReference type="PaxDb" id="208964-PA3805"/>
<dbReference type="DNASU" id="879170"/>
<dbReference type="GeneID" id="879170"/>
<dbReference type="KEGG" id="pae:PA3805"/>
<dbReference type="PATRIC" id="fig|208964.12.peg.3984"/>
<dbReference type="PseudoCAP" id="PA3805"/>
<dbReference type="HOGENOM" id="CLU_003728_7_1_6"/>
<dbReference type="InParanoid" id="Q9HXJ2"/>
<dbReference type="OrthoDB" id="129043at2"/>
<dbReference type="PhylomeDB" id="Q9HXJ2"/>
<dbReference type="BioCyc" id="PAER208964:G1FZ6-3876-MONOMER"/>
<dbReference type="EvolutionaryTrace" id="Q9HXJ2"/>
<dbReference type="Proteomes" id="UP000002438">
    <property type="component" value="Chromosome"/>
</dbReference>
<dbReference type="GO" id="GO:0009279">
    <property type="term" value="C:cell outer membrane"/>
    <property type="evidence" value="ECO:0007669"/>
    <property type="project" value="UniProtKB-SubCell"/>
</dbReference>
<dbReference type="GO" id="GO:0030911">
    <property type="term" value="F:TPR domain binding"/>
    <property type="evidence" value="ECO:0000314"/>
    <property type="project" value="PseudoCAP"/>
</dbReference>
<dbReference type="GO" id="GO:0009297">
    <property type="term" value="P:pilus assembly"/>
    <property type="evidence" value="ECO:0000314"/>
    <property type="project" value="PseudoCAP"/>
</dbReference>
<dbReference type="GO" id="GO:0046903">
    <property type="term" value="P:secretion"/>
    <property type="evidence" value="ECO:0000314"/>
    <property type="project" value="PseudoCAP"/>
</dbReference>
<dbReference type="GO" id="GO:0043683">
    <property type="term" value="P:type IV pilus assembly"/>
    <property type="evidence" value="ECO:0000314"/>
    <property type="project" value="PseudoCAP"/>
</dbReference>
<dbReference type="GO" id="GO:0043107">
    <property type="term" value="P:type IV pilus-dependent motility"/>
    <property type="evidence" value="ECO:0000314"/>
    <property type="project" value="PseudoCAP"/>
</dbReference>
<dbReference type="FunFam" id="1.25.40.10:FF:001817">
    <property type="entry name" value="Type 4 fimbrial biogenesis protein PilF"/>
    <property type="match status" value="1"/>
</dbReference>
<dbReference type="Gene3D" id="1.25.40.10">
    <property type="entry name" value="Tetratricopeptide repeat domain"/>
    <property type="match status" value="1"/>
</dbReference>
<dbReference type="InterPro" id="IPR013360">
    <property type="entry name" value="Pilus_4_PilW"/>
</dbReference>
<dbReference type="InterPro" id="IPR011990">
    <property type="entry name" value="TPR-like_helical_dom_sf"/>
</dbReference>
<dbReference type="InterPro" id="IPR019734">
    <property type="entry name" value="TPR_rpt"/>
</dbReference>
<dbReference type="NCBIfam" id="TIGR02521">
    <property type="entry name" value="type_IV_pilW"/>
    <property type="match status" value="1"/>
</dbReference>
<dbReference type="PANTHER" id="PTHR44186">
    <property type="match status" value="1"/>
</dbReference>
<dbReference type="PANTHER" id="PTHR44186:SF1">
    <property type="entry name" value="BARDET-BIEDL SYNDROME 4 PROTEIN"/>
    <property type="match status" value="1"/>
</dbReference>
<dbReference type="Pfam" id="PF13414">
    <property type="entry name" value="TPR_11"/>
    <property type="match status" value="1"/>
</dbReference>
<dbReference type="Pfam" id="PF13424">
    <property type="entry name" value="TPR_12"/>
    <property type="match status" value="1"/>
</dbReference>
<dbReference type="SMART" id="SM00028">
    <property type="entry name" value="TPR"/>
    <property type="match status" value="3"/>
</dbReference>
<dbReference type="SUPFAM" id="SSF48452">
    <property type="entry name" value="TPR-like"/>
    <property type="match status" value="1"/>
</dbReference>
<dbReference type="PROSITE" id="PS51257">
    <property type="entry name" value="PROKAR_LIPOPROTEIN"/>
    <property type="match status" value="1"/>
</dbReference>
<dbReference type="PROSITE" id="PS50005">
    <property type="entry name" value="TPR"/>
    <property type="match status" value="3"/>
</dbReference>
<dbReference type="PROSITE" id="PS50293">
    <property type="entry name" value="TPR_REGION"/>
    <property type="match status" value="1"/>
</dbReference>
<feature type="signal peptide" evidence="1">
    <location>
        <begin position="1"/>
        <end position="17"/>
    </location>
</feature>
<feature type="chain" id="PRO_5004326874" description="Type IV pilus assembly protein PilF" evidence="1">
    <location>
        <begin position="18"/>
        <end position="252"/>
    </location>
</feature>
<feature type="repeat" description="TPR 1" evidence="6 7">
    <location>
        <begin position="32"/>
        <end position="67"/>
    </location>
</feature>
<feature type="repeat" description="TPR 2" evidence="6 7">
    <location>
        <begin position="84"/>
        <end position="101"/>
    </location>
</feature>
<feature type="repeat" description="TPR 3" evidence="6 7">
    <location>
        <begin position="104"/>
        <end position="133"/>
    </location>
</feature>
<feature type="repeat" description="TPR 4" evidence="6 7">
    <location>
        <begin position="139"/>
        <end position="171"/>
    </location>
</feature>
<feature type="repeat" description="TPR 5" evidence="6 7">
    <location>
        <begin position="174"/>
        <end position="203"/>
    </location>
</feature>
<feature type="repeat" description="TPR 6" evidence="6 7">
    <location>
        <begin position="208"/>
        <end position="235"/>
    </location>
</feature>
<feature type="lipid moiety-binding region" description="N-palmitoyl cysteine" evidence="1">
    <location>
        <position position="18"/>
    </location>
</feature>
<feature type="lipid moiety-binding region" description="S-diacylglycerol cysteine" evidence="1">
    <location>
        <position position="18"/>
    </location>
</feature>
<feature type="mutagenesis site" description="Loss of association with the outer membrane. PilQ multimers were detected not only in the outer membrane but also in the inner membrane and the soluble lysate." evidence="3">
    <original>C</original>
    <variation>G</variation>
    <location>
        <position position="18"/>
    </location>
</feature>
<feature type="helix" evidence="10">
    <location>
        <begin position="33"/>
        <end position="49"/>
    </location>
</feature>
<feature type="helix" evidence="10">
    <location>
        <begin position="54"/>
        <end position="56"/>
    </location>
</feature>
<feature type="helix" evidence="10">
    <location>
        <begin position="57"/>
        <end position="66"/>
    </location>
</feature>
<feature type="helix" evidence="10">
    <location>
        <begin position="71"/>
        <end position="83"/>
    </location>
</feature>
<feature type="helix" evidence="10">
    <location>
        <begin position="87"/>
        <end position="100"/>
    </location>
</feature>
<feature type="helix" evidence="10">
    <location>
        <begin position="105"/>
        <end position="117"/>
    </location>
</feature>
<feature type="helix" evidence="10">
    <location>
        <begin position="121"/>
        <end position="131"/>
    </location>
</feature>
<feature type="helix" evidence="10">
    <location>
        <begin position="140"/>
        <end position="153"/>
    </location>
</feature>
<feature type="helix" evidence="10">
    <location>
        <begin position="157"/>
        <end position="170"/>
    </location>
</feature>
<feature type="helix" evidence="10">
    <location>
        <begin position="175"/>
        <end position="187"/>
    </location>
</feature>
<feature type="helix" evidence="10">
    <location>
        <begin position="191"/>
        <end position="202"/>
    </location>
</feature>
<feature type="helix" evidence="10">
    <location>
        <begin position="209"/>
        <end position="221"/>
    </location>
</feature>
<feature type="helix" evidence="10">
    <location>
        <begin position="225"/>
        <end position="238"/>
    </location>
</feature>
<feature type="helix" evidence="10">
    <location>
        <begin position="243"/>
        <end position="249"/>
    </location>
</feature>
<organism>
    <name type="scientific">Pseudomonas aeruginosa (strain ATCC 15692 / DSM 22644 / CIP 104116 / JCM 14847 / LMG 12228 / 1C / PRS 101 / PAO1)</name>
    <dbReference type="NCBI Taxonomy" id="208964"/>
    <lineage>
        <taxon>Bacteria</taxon>
        <taxon>Pseudomonadati</taxon>
        <taxon>Pseudomonadota</taxon>
        <taxon>Gammaproteobacteria</taxon>
        <taxon>Pseudomonadales</taxon>
        <taxon>Pseudomonadaceae</taxon>
        <taxon>Pseudomonas</taxon>
    </lineage>
</organism>
<accession>Q9HXJ2</accession>
<keyword id="KW-0002">3D-structure</keyword>
<keyword id="KW-0998">Cell outer membrane</keyword>
<keyword id="KW-0449">Lipoprotein</keyword>
<keyword id="KW-0472">Membrane</keyword>
<keyword id="KW-0564">Palmitate</keyword>
<keyword id="KW-1185">Reference proteome</keyword>
<keyword id="KW-0677">Repeat</keyword>
<keyword id="KW-0732">Signal</keyword>
<keyword id="KW-0802">TPR repeat</keyword>
<proteinExistence type="evidence at protein level"/>
<evidence type="ECO:0000255" key="1">
    <source>
        <dbReference type="PROSITE-ProRule" id="PRU00303"/>
    </source>
</evidence>
<evidence type="ECO:0000269" key="2">
    <source>
    </source>
</evidence>
<evidence type="ECO:0000269" key="3">
    <source>
    </source>
</evidence>
<evidence type="ECO:0000269" key="4">
    <source>
    </source>
</evidence>
<evidence type="ECO:0000269" key="5">
    <source>
    </source>
</evidence>
<evidence type="ECO:0000305" key="6">
    <source>
    </source>
</evidence>
<evidence type="ECO:0000305" key="7">
    <source>
    </source>
</evidence>
<evidence type="ECO:0007744" key="8">
    <source>
        <dbReference type="PDB" id="2FI7"/>
    </source>
</evidence>
<evidence type="ECO:0007744" key="9">
    <source>
        <dbReference type="PDB" id="2HO1"/>
    </source>
</evidence>
<evidence type="ECO:0007829" key="10">
    <source>
        <dbReference type="PDB" id="2HO1"/>
    </source>
</evidence>
<protein>
    <recommendedName>
        <fullName>Type IV pilus assembly protein PilF</fullName>
    </recommendedName>
</protein>
<gene>
    <name type="primary">pilF</name>
    <name type="ordered locus">PA3805</name>
</gene>
<comment type="function">
    <text evidence="3 4 5">Essential component of the type IV pilus (T4P) that plays a role in surface and host cell adhesion, colonization, biofilm maturation, virulence, and twitching, a form of surface-associated motility facilitated by cycles of extension, adhesion, and retraction of T4P fibers (PubMed:8973346). Plays an essential role in the outer membrane localization and assembly of PilQ into secretins which are dodecamers of PilQ (PubMed:18776008, PubMed:23547883).</text>
</comment>
<comment type="subunit">
    <text evidence="4">Interacts with PilQ; this interaction is essential for assemby of PilQ into secretins.</text>
</comment>
<comment type="subcellular location">
    <subcellularLocation>
        <location evidence="3">Cell outer membrane</location>
        <topology evidence="1">Lipid-anchor</topology>
    </subcellularLocation>
</comment>
<comment type="domain">
    <text evidence="2 3 4">Contains six tetratricopeptide (TPR) protein-protein interaction motifs (PubMed:16403447, PubMed:18776008, PubMed:23547883). TPR1-TPR4 form the minimal region required for secretin assembly and function (PubMed:23547883).</text>
</comment>
<comment type="disruption phenotype">
    <text evidence="3 5">Mutant shows an impaired export/assembly of the fimbrial subunit PilA, and accumulates this protein in the membrane fraction (PubMed:8973346). In addition, loss of PilF expression abolishes multimerization of PilQ (PubMed:18776008).</text>
</comment>